<accession>Q9RAJ5</accession>
<evidence type="ECO:0000255" key="1">
    <source>
        <dbReference type="HAMAP-Rule" id="MF_00139"/>
    </source>
</evidence>
<evidence type="ECO:0000255" key="2">
    <source>
        <dbReference type="PROSITE-ProRule" id="PRU01202"/>
    </source>
</evidence>
<evidence type="ECO:0000305" key="3"/>
<proteinExistence type="inferred from homology"/>
<gene>
    <name evidence="1" type="primary">purH</name>
    <name type="ordered locus">MAP_0903</name>
</gene>
<keyword id="KW-0378">Hydrolase</keyword>
<keyword id="KW-0511">Multifunctional enzyme</keyword>
<keyword id="KW-0658">Purine biosynthesis</keyword>
<keyword id="KW-1185">Reference proteome</keyword>
<keyword id="KW-0808">Transferase</keyword>
<dbReference type="EC" id="2.1.2.3" evidence="1"/>
<dbReference type="EC" id="3.5.4.10" evidence="1"/>
<dbReference type="EMBL" id="AF191543">
    <property type="protein sequence ID" value="AAF05727.1"/>
    <property type="molecule type" value="Genomic_DNA"/>
</dbReference>
<dbReference type="EMBL" id="AE016958">
    <property type="protein sequence ID" value="AAS03220.1"/>
    <property type="status" value="ALT_INIT"/>
    <property type="molecule type" value="Genomic_DNA"/>
</dbReference>
<dbReference type="RefSeq" id="WP_040963270.1">
    <property type="nucleotide sequence ID" value="NC_002944.2"/>
</dbReference>
<dbReference type="SMR" id="Q9RAJ5"/>
<dbReference type="STRING" id="262316.MAP_0903"/>
<dbReference type="KEGG" id="mpa:MAP_0903"/>
<dbReference type="PATRIC" id="fig|262316.17.peg.944"/>
<dbReference type="eggNOG" id="COG0138">
    <property type="taxonomic scope" value="Bacteria"/>
</dbReference>
<dbReference type="HOGENOM" id="CLU_016316_5_2_11"/>
<dbReference type="UniPathway" id="UPA00074">
    <property type="reaction ID" value="UER00133"/>
</dbReference>
<dbReference type="UniPathway" id="UPA00074">
    <property type="reaction ID" value="UER00135"/>
</dbReference>
<dbReference type="Proteomes" id="UP000000580">
    <property type="component" value="Chromosome"/>
</dbReference>
<dbReference type="GO" id="GO:0005829">
    <property type="term" value="C:cytosol"/>
    <property type="evidence" value="ECO:0007669"/>
    <property type="project" value="TreeGrafter"/>
</dbReference>
<dbReference type="GO" id="GO:0003937">
    <property type="term" value="F:IMP cyclohydrolase activity"/>
    <property type="evidence" value="ECO:0007669"/>
    <property type="project" value="UniProtKB-UniRule"/>
</dbReference>
<dbReference type="GO" id="GO:0004643">
    <property type="term" value="F:phosphoribosylaminoimidazolecarboxamide formyltransferase activity"/>
    <property type="evidence" value="ECO:0007669"/>
    <property type="project" value="UniProtKB-UniRule"/>
</dbReference>
<dbReference type="GO" id="GO:0006189">
    <property type="term" value="P:'de novo' IMP biosynthetic process"/>
    <property type="evidence" value="ECO:0007669"/>
    <property type="project" value="UniProtKB-UniRule"/>
</dbReference>
<dbReference type="CDD" id="cd01421">
    <property type="entry name" value="IMPCH"/>
    <property type="match status" value="1"/>
</dbReference>
<dbReference type="FunFam" id="3.40.140.20:FF:000001">
    <property type="entry name" value="Bifunctional purine biosynthesis protein PurH"/>
    <property type="match status" value="1"/>
</dbReference>
<dbReference type="FunFam" id="3.40.140.20:FF:000002">
    <property type="entry name" value="Bifunctional purine biosynthesis protein PurH"/>
    <property type="match status" value="1"/>
</dbReference>
<dbReference type="FunFam" id="3.40.50.1380:FF:000001">
    <property type="entry name" value="Bifunctional purine biosynthesis protein PurH"/>
    <property type="match status" value="1"/>
</dbReference>
<dbReference type="Gene3D" id="3.40.140.20">
    <property type="match status" value="2"/>
</dbReference>
<dbReference type="Gene3D" id="3.40.50.1380">
    <property type="entry name" value="Methylglyoxal synthase-like domain"/>
    <property type="match status" value="1"/>
</dbReference>
<dbReference type="HAMAP" id="MF_00139">
    <property type="entry name" value="PurH"/>
    <property type="match status" value="1"/>
</dbReference>
<dbReference type="InterPro" id="IPR024051">
    <property type="entry name" value="AICAR_Tfase_dup_dom_sf"/>
</dbReference>
<dbReference type="InterPro" id="IPR016193">
    <property type="entry name" value="Cytidine_deaminase-like"/>
</dbReference>
<dbReference type="InterPro" id="IPR011607">
    <property type="entry name" value="MGS-like_dom"/>
</dbReference>
<dbReference type="InterPro" id="IPR036914">
    <property type="entry name" value="MGS-like_dom_sf"/>
</dbReference>
<dbReference type="InterPro" id="IPR002695">
    <property type="entry name" value="PurH-like"/>
</dbReference>
<dbReference type="NCBIfam" id="NF002049">
    <property type="entry name" value="PRK00881.1"/>
    <property type="match status" value="1"/>
</dbReference>
<dbReference type="NCBIfam" id="TIGR00355">
    <property type="entry name" value="purH"/>
    <property type="match status" value="1"/>
</dbReference>
<dbReference type="PANTHER" id="PTHR11692:SF0">
    <property type="entry name" value="BIFUNCTIONAL PURINE BIOSYNTHESIS PROTEIN ATIC"/>
    <property type="match status" value="1"/>
</dbReference>
<dbReference type="PANTHER" id="PTHR11692">
    <property type="entry name" value="BIFUNCTIONAL PURINE BIOSYNTHESIS PROTEIN PURH"/>
    <property type="match status" value="1"/>
</dbReference>
<dbReference type="Pfam" id="PF01808">
    <property type="entry name" value="AICARFT_IMPCHas"/>
    <property type="match status" value="1"/>
</dbReference>
<dbReference type="Pfam" id="PF02142">
    <property type="entry name" value="MGS"/>
    <property type="match status" value="1"/>
</dbReference>
<dbReference type="PIRSF" id="PIRSF000414">
    <property type="entry name" value="AICARFT_IMPCHas"/>
    <property type="match status" value="1"/>
</dbReference>
<dbReference type="SMART" id="SM00798">
    <property type="entry name" value="AICARFT_IMPCHas"/>
    <property type="match status" value="1"/>
</dbReference>
<dbReference type="SMART" id="SM00851">
    <property type="entry name" value="MGS"/>
    <property type="match status" value="1"/>
</dbReference>
<dbReference type="SUPFAM" id="SSF53927">
    <property type="entry name" value="Cytidine deaminase-like"/>
    <property type="match status" value="1"/>
</dbReference>
<dbReference type="SUPFAM" id="SSF52335">
    <property type="entry name" value="Methylglyoxal synthase-like"/>
    <property type="match status" value="1"/>
</dbReference>
<dbReference type="PROSITE" id="PS51855">
    <property type="entry name" value="MGS"/>
    <property type="match status" value="1"/>
</dbReference>
<reference key="1">
    <citation type="submission" date="1999-10" db="EMBL/GenBank/DDBJ databases">
        <title>Identification of the purine biosynthetic genes purN and purH in Mycobacterium avium subsp. paratuberculosis.</title>
        <authorList>
            <person name="Urbanic K.U."/>
            <person name="Raymond M."/>
            <person name="Mutharia L.M."/>
        </authorList>
    </citation>
    <scope>NUCLEOTIDE SEQUENCE [GENOMIC DNA]</scope>
    <source>
        <strain>ATCC 19698 / CIP 103963 / DSM 44133 / TMC 807</strain>
    </source>
</reference>
<reference key="2">
    <citation type="journal article" date="2005" name="Proc. Natl. Acad. Sci. U.S.A.">
        <title>The complete genome sequence of Mycobacterium avium subspecies paratuberculosis.</title>
        <authorList>
            <person name="Li L."/>
            <person name="Bannantine J.P."/>
            <person name="Zhang Q."/>
            <person name="Amonsin A."/>
            <person name="May B.J."/>
            <person name="Alt D."/>
            <person name="Banerji N."/>
            <person name="Kanjilal S."/>
            <person name="Kapur V."/>
        </authorList>
    </citation>
    <scope>NUCLEOTIDE SEQUENCE [LARGE SCALE GENOMIC DNA]</scope>
    <source>
        <strain>ATCC BAA-968 / K-10</strain>
    </source>
</reference>
<protein>
    <recommendedName>
        <fullName evidence="1">Bifunctional purine biosynthesis protein PurH</fullName>
    </recommendedName>
    <domain>
        <recommendedName>
            <fullName evidence="1">Phosphoribosylaminoimidazolecarboxamide formyltransferase</fullName>
            <ecNumber evidence="1">2.1.2.3</ecNumber>
        </recommendedName>
        <alternativeName>
            <fullName evidence="1">AICAR transformylase</fullName>
        </alternativeName>
    </domain>
    <domain>
        <recommendedName>
            <fullName evidence="1">IMP cyclohydrolase</fullName>
            <ecNumber evidence="1">3.5.4.10</ecNumber>
        </recommendedName>
        <alternativeName>
            <fullName evidence="1">ATIC</fullName>
        </alternativeName>
        <alternativeName>
            <fullName evidence="1">IMP synthase</fullName>
        </alternativeName>
        <alternativeName>
            <fullName evidence="1">Inosinicase</fullName>
        </alternativeName>
    </domain>
</protein>
<feature type="chain" id="PRO_0000192105" description="Bifunctional purine biosynthesis protein PurH">
    <location>
        <begin position="1"/>
        <end position="527"/>
    </location>
</feature>
<feature type="domain" description="MGS-like" evidence="2">
    <location>
        <begin position="9"/>
        <end position="156"/>
    </location>
</feature>
<feature type="sequence conflict" description="In Ref. 1; AAF05727." evidence="3" ref="1">
    <original>V</original>
    <variation>E</variation>
    <location>
        <position position="63"/>
    </location>
</feature>
<feature type="sequence conflict" description="In Ref. 1; AAF05727." evidence="3" ref="1">
    <original>A</original>
    <variation>V</variation>
    <location>
        <position position="522"/>
    </location>
</feature>
<feature type="sequence conflict" description="In Ref. 1; AAF05727." evidence="3" ref="1">
    <original>A</original>
    <variation>V</variation>
    <location>
        <position position="526"/>
    </location>
</feature>
<name>PUR9_MYCPA</name>
<sequence length="527" mass="55888">MSTDDWRENAKRPIRRALISVYDKTGLVELAQGLTEAGVEIVSTGSTAKVIAEKGIPVTRVEVLTGFPEVLDGRVKTLHPRVHAGLLADLRKPEHAAALEQLGIAAFELVVVNLYPFTETVDSGAGIDECVEQIDIGGPSMVRAAAKNHPSVAVVVDPLGYDGVLAAVRHGGFTLAERKRLAALAFQHTADYDIAVATWMESTLAPEHPPTTFPKWLGRSWRRSAMLRYGENPHQQASLYSDPGAWPGLAQAEQLHGKEMSYNNFTDADAAWRAAFDHEQTCVAIIKHANPCGIAISSISVADAHRKAHECDPLSAFGGVIAANTEVSVEMAEYVSTIFTEVIIAPAYQPAALEILTRKKNIRVLVASEPLTGGTELRPISGGLLVQQRDELDAHGDNPANWTLATGAPADPATLADLVFAWRVCRAVKSNAIVIAAGGATIGVGMGQVNRVDAARLAVERGGDRVRGAVAASDAFFPFPDGLETLTGAGVKAVVHPGGSVRDDEVTAAAANAGITLYLTGARHFAH</sequence>
<comment type="catalytic activity">
    <reaction evidence="1">
        <text>(6R)-10-formyltetrahydrofolate + 5-amino-1-(5-phospho-beta-D-ribosyl)imidazole-4-carboxamide = 5-formamido-1-(5-phospho-D-ribosyl)imidazole-4-carboxamide + (6S)-5,6,7,8-tetrahydrofolate</text>
        <dbReference type="Rhea" id="RHEA:22192"/>
        <dbReference type="ChEBI" id="CHEBI:57453"/>
        <dbReference type="ChEBI" id="CHEBI:58467"/>
        <dbReference type="ChEBI" id="CHEBI:58475"/>
        <dbReference type="ChEBI" id="CHEBI:195366"/>
        <dbReference type="EC" id="2.1.2.3"/>
    </reaction>
</comment>
<comment type="catalytic activity">
    <reaction evidence="1">
        <text>IMP + H2O = 5-formamido-1-(5-phospho-D-ribosyl)imidazole-4-carboxamide</text>
        <dbReference type="Rhea" id="RHEA:18445"/>
        <dbReference type="ChEBI" id="CHEBI:15377"/>
        <dbReference type="ChEBI" id="CHEBI:58053"/>
        <dbReference type="ChEBI" id="CHEBI:58467"/>
        <dbReference type="EC" id="3.5.4.10"/>
    </reaction>
</comment>
<comment type="pathway">
    <text evidence="1">Purine metabolism; IMP biosynthesis via de novo pathway; 5-formamido-1-(5-phospho-D-ribosyl)imidazole-4-carboxamide from 5-amino-1-(5-phospho-D-ribosyl)imidazole-4-carboxamide (10-formyl THF route): step 1/1.</text>
</comment>
<comment type="pathway">
    <text evidence="1">Purine metabolism; IMP biosynthesis via de novo pathway; IMP from 5-formamido-1-(5-phospho-D-ribosyl)imidazole-4-carboxamide: step 1/1.</text>
</comment>
<comment type="domain">
    <text evidence="1">The IMP cyclohydrolase activity resides in the N-terminal region.</text>
</comment>
<comment type="similarity">
    <text evidence="1">Belongs to the PurH family.</text>
</comment>
<comment type="sequence caution" evidence="3">
    <conflict type="erroneous initiation">
        <sequence resource="EMBL-CDS" id="AAS03220"/>
    </conflict>
</comment>
<organism>
    <name type="scientific">Mycolicibacterium paratuberculosis (strain ATCC BAA-968 / K-10)</name>
    <name type="common">Mycobacterium paratuberculosis</name>
    <dbReference type="NCBI Taxonomy" id="262316"/>
    <lineage>
        <taxon>Bacteria</taxon>
        <taxon>Bacillati</taxon>
        <taxon>Actinomycetota</taxon>
        <taxon>Actinomycetes</taxon>
        <taxon>Mycobacteriales</taxon>
        <taxon>Mycobacteriaceae</taxon>
        <taxon>Mycobacterium</taxon>
        <taxon>Mycobacterium avium complex (MAC)</taxon>
    </lineage>
</organism>